<comment type="function">
    <text evidence="5">Catalyzes the oxidative deamination of a wide range of aliphatic monoamines and diamines (PubMed:27315927). The physiological electron acceptor is an azurin-like blue protein (PubMed:27315927).</text>
</comment>
<comment type="catalytic activity">
    <reaction evidence="5">
        <text>an aliphatic amine + A + H2O = an aldehyde + AH2 + NH4(+)</text>
        <dbReference type="Rhea" id="RHEA:51128"/>
        <dbReference type="ChEBI" id="CHEBI:13193"/>
        <dbReference type="ChEBI" id="CHEBI:15377"/>
        <dbReference type="ChEBI" id="CHEBI:17478"/>
        <dbReference type="ChEBI" id="CHEBI:17499"/>
        <dbReference type="ChEBI" id="CHEBI:28938"/>
        <dbReference type="ChEBI" id="CHEBI:58001"/>
    </reaction>
    <physiologicalReaction direction="left-to-right" evidence="5">
        <dbReference type="Rhea" id="RHEA:51129"/>
    </physiologicalReaction>
</comment>
<comment type="cofactor">
    <cofactor evidence="2 3">
        <name>cysteine tryptophylquinone residue</name>
        <dbReference type="ChEBI" id="CHEBI:20252"/>
    </cofactor>
    <text evidence="2 3">Contains 1 cysteine tryptophylquinone per subunit.</text>
</comment>
<comment type="activity regulation">
    <text evidence="5">Inhibited by various carbonyl reagents, such as p-nitrophenylhydrazine (pNPH), 2,4-dinitrophenylhydrazine, semicarbazide and hydroxylamine.</text>
</comment>
<comment type="biophysicochemical properties">
    <phDependence>
        <text evidence="5">Optimum pH is around 8.0 for n-butylamine oxidation.</text>
    </phDependence>
</comment>
<comment type="subunit">
    <text evidence="3 4 5">Heterotrimer of an alpha, a beta and a gamma subunit.</text>
</comment>
<comment type="subcellular location">
    <subcellularLocation>
        <location evidence="5">Periplasm</location>
    </subcellularLocation>
    <text evidence="1">Is probably co-translocated into the periplasm when associated with the alpha and/or beta subunit, which contain both a signal peptide.</text>
</comment>
<comment type="PTM">
    <text evidence="2 3">The cysteine tryptophylquinone (CTQ) is generated by oxidation of the indole ring of a tryptophan residue to form tryptophylquinone, followed by covalent cross-linking with a cysteine residue.</text>
</comment>
<comment type="mass spectrometry"/>
<comment type="mass spectrometry">
    <text>With methionine sulfoxide.</text>
</comment>
<comment type="similarity">
    <text evidence="7">Belongs to the quinohemoprotein amine dehydrogenase subunit gamma family.</text>
</comment>
<comment type="caution">
    <text evidence="8">The oxidation form of Met-30 is subject of controversy and could be the artifactual result of sample handling.</text>
</comment>
<name>QADG_PSEPU</name>
<evidence type="ECO:0000250" key="1">
    <source>
        <dbReference type="UniProtKB" id="Q8VUS8"/>
    </source>
</evidence>
<evidence type="ECO:0000269" key="2">
    <source>
    </source>
</evidence>
<evidence type="ECO:0000269" key="3">
    <source>
    </source>
</evidence>
<evidence type="ECO:0000269" key="4">
    <source>
    </source>
</evidence>
<evidence type="ECO:0000269" key="5">
    <source>
    </source>
</evidence>
<evidence type="ECO:0000303" key="6">
    <source>
    </source>
</evidence>
<evidence type="ECO:0000305" key="7"/>
<evidence type="ECO:0000305" key="8">
    <source>
    </source>
</evidence>
<evidence type="ECO:0000305" key="9">
    <source>
    </source>
</evidence>
<evidence type="ECO:0007744" key="10">
    <source>
        <dbReference type="PDB" id="1JMX"/>
    </source>
</evidence>
<evidence type="ECO:0007744" key="11">
    <source>
        <dbReference type="PDB" id="1JMZ"/>
    </source>
</evidence>
<evidence type="ECO:0007829" key="12">
    <source>
        <dbReference type="PDB" id="1JMX"/>
    </source>
</evidence>
<sequence>MSAVAGCTATTDPGWEVDAFGGVSSLCQPMEADLYGCSDPCWWPAQVPDMMSTYQDWNAQASNSAEDWRNLGTVFPKDK</sequence>
<protein>
    <recommendedName>
        <fullName>Quinohemoprotein amine dehydrogenase subunit gamma</fullName>
        <shortName evidence="6">QH-AmDH</shortName>
        <ecNumber evidence="5">1.4.9.-</ecNumber>
    </recommendedName>
    <alternativeName>
        <fullName>Quinohemoprotein amine dehydrogenase 9 kDa subunit</fullName>
    </alternativeName>
    <alternativeName>
        <fullName>Quinohemoprotein amine dehydrogenase catalytic subunit</fullName>
    </alternativeName>
</protein>
<feature type="initiator methionine" description="Removed" evidence="2">
    <location>
        <position position="1"/>
    </location>
</feature>
<feature type="chain" id="PRO_0000220551" description="Quinohemoprotein amine dehydrogenase subunit gamma">
    <location>
        <begin position="2"/>
        <end position="79"/>
    </location>
</feature>
<feature type="active site" description="Proton acceptor" evidence="4 9">
    <location>
        <position position="33"/>
    </location>
</feature>
<feature type="modified residue" description="Tryptophylquinone" evidence="2 3">
    <location>
        <position position="43"/>
    </location>
</feature>
<feature type="cross-link" description="4-cysteinyl-glutamic acid (Cys-Glu)" evidence="2 3">
    <location>
        <begin position="7"/>
        <end position="16"/>
    </location>
</feature>
<feature type="cross-link" description="3-cysteinyl-aspartic acid (Cys-Asp)" evidence="2 3">
    <location>
        <begin position="27"/>
        <end position="33"/>
    </location>
</feature>
<feature type="cross-link" description="4'-cysteinyl-tryptophylquinone (Cys-Trp)" evidence="2 3">
    <location>
        <begin position="37"/>
        <end position="43"/>
    </location>
</feature>
<feature type="cross-link" description="3-cysteinyl-aspartic acid (Cys-Asp)" evidence="2 3">
    <location>
        <begin position="41"/>
        <end position="49"/>
    </location>
</feature>
<feature type="sequence variant" description="In strain: IFO 15366." evidence="2">
    <original>S</original>
    <variation>T</variation>
    <location>
        <position position="62"/>
    </location>
</feature>
<feature type="sequence variant" description="In strain: IFO 15366." evidence="2">
    <original>E</original>
    <variation>D</variation>
    <location>
        <position position="66"/>
    </location>
</feature>
<feature type="strand" evidence="12">
    <location>
        <begin position="15"/>
        <end position="17"/>
    </location>
</feature>
<feature type="strand" evidence="12">
    <location>
        <begin position="21"/>
        <end position="26"/>
    </location>
</feature>
<feature type="helix" evidence="12">
    <location>
        <begin position="30"/>
        <end position="33"/>
    </location>
</feature>
<feature type="helix" evidence="12">
    <location>
        <begin position="34"/>
        <end position="38"/>
    </location>
</feature>
<feature type="turn" evidence="12">
    <location>
        <begin position="39"/>
        <end position="41"/>
    </location>
</feature>
<feature type="turn" evidence="12">
    <location>
        <begin position="44"/>
        <end position="46"/>
    </location>
</feature>
<feature type="turn" evidence="12">
    <location>
        <begin position="50"/>
        <end position="53"/>
    </location>
</feature>
<feature type="turn" evidence="12">
    <location>
        <begin position="55"/>
        <end position="60"/>
    </location>
</feature>
<feature type="helix" evidence="12">
    <location>
        <begin position="64"/>
        <end position="67"/>
    </location>
</feature>
<feature type="helix" evidence="12">
    <location>
        <begin position="68"/>
        <end position="70"/>
    </location>
</feature>
<proteinExistence type="evidence at protein level"/>
<organism>
    <name type="scientific">Pseudomonas putida</name>
    <name type="common">Arthrobacter siderocapsulatus</name>
    <dbReference type="NCBI Taxonomy" id="303"/>
    <lineage>
        <taxon>Bacteria</taxon>
        <taxon>Pseudomonadati</taxon>
        <taxon>Pseudomonadota</taxon>
        <taxon>Gammaproteobacteria</taxon>
        <taxon>Pseudomonadales</taxon>
        <taxon>Pseudomonadaceae</taxon>
        <taxon>Pseudomonas</taxon>
    </lineage>
</organism>
<gene>
    <name type="primary">qhnDH</name>
</gene>
<reference key="1">
    <citation type="journal article" date="2001" name="J. Biol. Chem.">
        <title>The covalent structure of the small subunit from Pseudomonas putida amine dehydrogenase reveals the presence of three novel types of internal cross-linkages, all involving cysteine in a thioether bond.</title>
        <authorList>
            <person name="Vandenberghe I."/>
            <person name="Kim J.-K."/>
            <person name="Devreese B."/>
            <person name="Hacisalihoglu A."/>
            <person name="Iwabuki H."/>
            <person name="Okajima T."/>
            <person name="Kuroda S."/>
            <person name="Adachi O."/>
            <person name="Jongejan J.A."/>
            <person name="Duine J.A."/>
            <person name="Tanizawa K."/>
            <person name="van Beeumen J."/>
        </authorList>
    </citation>
    <scope>NUCLEOTIDE SEQUENCE [GENOMIC DNA]</scope>
    <scope>PROTEIN SEQUENCE OF 2-79</scope>
    <scope>MASS SPECTROMETRY</scope>
    <scope>COFACTOR</scope>
    <source>
        <strain>ATCC 12633 / DSM 291 / JCM 13063 / CCUG 12690 / LMG 2257 / NBRC 14164 / NCIMB 9494 / NCTC 10936 / VKM B-2187 / Stanier 90</strain>
        <strain>IFO 15633</strain>
    </source>
</reference>
<reference key="2">
    <citation type="journal article" date="1998" name="Biosci. Biotechnol. Biochem.">
        <title>Characterization of quinohemoprotein amine dehydrogenase from Pseudomonas putida.</title>
        <authorList>
            <person name="Adachi O."/>
            <person name="Kubota T."/>
            <person name="Hacisalihoglu A."/>
            <person name="Toyama H."/>
            <person name="Shinagawa E."/>
            <person name="Duine J.A."/>
            <person name="Matsushita K."/>
        </authorList>
    </citation>
    <scope>FUNCTION</scope>
    <scope>CATALYTIC ACTIVITY</scope>
    <scope>ACTIVITY REGULATION</scope>
    <scope>BIOPHYSICOCHEMICAL PROPERTIES</scope>
    <scope>SUBUNIT</scope>
    <scope>SUBCELLULAR LOCATION</scope>
    <source>
        <strain>IFO 15366</strain>
    </source>
</reference>
<reference evidence="10 11" key="3">
    <citation type="journal article" date="2002" name="J. Biol. Chem.">
        <title>Crystal structure of quinohemoprotein amine dehydrogenase from Pseudomonas putida. Identification of a novel quinone cofactor encaged by multiple thioether cross-bridges.</title>
        <authorList>
            <person name="Satoh A."/>
            <person name="Kim J.K."/>
            <person name="Miyahara I."/>
            <person name="Devreese B."/>
            <person name="Vandenberghe I."/>
            <person name="Hacisalihoglu A."/>
            <person name="Okajima T."/>
            <person name="Kuroda S."/>
            <person name="Adachi O."/>
            <person name="Duine J.A."/>
            <person name="Van Beeumen J."/>
            <person name="Tanizawa K."/>
            <person name="Hirotsu K."/>
        </authorList>
    </citation>
    <scope>X-RAY CRYSTALLOGRAPHY (1.9 ANGSTROMS)</scope>
    <scope>COFACTOR</scope>
    <scope>SUBUNIT</scope>
    <scope>ACTIVE SITE</scope>
</reference>
<reference key="4">
    <citation type="journal article" date="2003" name="Biochim. Biophys. Acta">
        <title>The active site structure of quinohemoprotein amine dehydrogenase inhibited by p-nitrophenylhydrazine.</title>
        <authorList>
            <person name="Satoh A."/>
            <person name="Adachi O."/>
            <person name="Tanizawa K."/>
            <person name="Hirotsu K."/>
        </authorList>
    </citation>
    <scope>X-RAY CRYSTALLOGRAPHY (2.0 ANGSTROMS) IN COMPLEX WITH THE INHIBITOR PNPH</scope>
    <scope>SUBUNIT</scope>
    <scope>ACTIVE SITE</scope>
</reference>
<keyword id="KW-0002">3D-structure</keyword>
<keyword id="KW-0885">CTQ</keyword>
<keyword id="KW-0903">Direct protein sequencing</keyword>
<keyword id="KW-0249">Electron transport</keyword>
<keyword id="KW-0558">Oxidation</keyword>
<keyword id="KW-0560">Oxidoreductase</keyword>
<keyword id="KW-0574">Periplasm</keyword>
<keyword id="KW-0883">Thioether bond</keyword>
<keyword id="KW-0813">Transport</keyword>
<dbReference type="EC" id="1.4.9.-" evidence="5"/>
<dbReference type="EMBL" id="AB063331">
    <property type="protein sequence ID" value="BAB72010.1"/>
    <property type="molecule type" value="Genomic_DNA"/>
</dbReference>
<dbReference type="PDB" id="1JMX">
    <property type="method" value="X-ray"/>
    <property type="resolution" value="1.90 A"/>
    <property type="chains" value="G=1-79"/>
</dbReference>
<dbReference type="PDB" id="1JMZ">
    <property type="method" value="X-ray"/>
    <property type="resolution" value="2.00 A"/>
    <property type="chains" value="G=1-79"/>
</dbReference>
<dbReference type="PDBsum" id="1JMX"/>
<dbReference type="PDBsum" id="1JMZ"/>
<dbReference type="SMR" id="P0A182"/>
<dbReference type="eggNOG" id="ENOG50324ZB">
    <property type="taxonomic scope" value="Bacteria"/>
</dbReference>
<dbReference type="BRENDA" id="1.4.9.2">
    <property type="organism ID" value="5092"/>
</dbReference>
<dbReference type="EvolutionaryTrace" id="P0A182"/>
<dbReference type="GO" id="GO:0042597">
    <property type="term" value="C:periplasmic space"/>
    <property type="evidence" value="ECO:0007669"/>
    <property type="project" value="UniProtKB-SubCell"/>
</dbReference>
<dbReference type="GO" id="GO:0030058">
    <property type="term" value="F:aliphatic amine dehydrogenase activity"/>
    <property type="evidence" value="ECO:0007669"/>
    <property type="project" value="RHEA"/>
</dbReference>
<dbReference type="Gene3D" id="4.10.940.10">
    <property type="entry name" value="Quinohemoprotein amine dehydrogenase, gamma subunit structural domain"/>
    <property type="match status" value="1"/>
</dbReference>
<dbReference type="InterPro" id="IPR015084">
    <property type="entry name" value="QH-AmDH_gsu_dom"/>
</dbReference>
<dbReference type="InterPro" id="IPR036487">
    <property type="entry name" value="QH-AmDH_gsu_sf"/>
</dbReference>
<dbReference type="InterPro" id="IPR047830">
    <property type="entry name" value="QHNDH_gamma"/>
</dbReference>
<dbReference type="NCBIfam" id="NF037958">
    <property type="entry name" value="QH_gamma"/>
    <property type="match status" value="1"/>
</dbReference>
<dbReference type="Pfam" id="PF08992">
    <property type="entry name" value="QH-AmDH_gamma"/>
    <property type="match status" value="1"/>
</dbReference>
<dbReference type="SUPFAM" id="SSF69131">
    <property type="entry name" value="Quinohemoprotein amine dehydrogenase C chain"/>
    <property type="match status" value="1"/>
</dbReference>
<accession>P0A182</accession>
<accession>Q88HA0</accession>
<accession>Q8VW83</accession>